<accession>B1KSA0</accession>
<feature type="chain" id="PRO_1000190317" description="RNA-binding protein Hfq">
    <location>
        <begin position="1"/>
        <end position="85"/>
    </location>
</feature>
<feature type="domain" description="Sm" evidence="2">
    <location>
        <begin position="10"/>
        <end position="70"/>
    </location>
</feature>
<organism>
    <name type="scientific">Clostridium botulinum (strain Loch Maree / Type A3)</name>
    <dbReference type="NCBI Taxonomy" id="498214"/>
    <lineage>
        <taxon>Bacteria</taxon>
        <taxon>Bacillati</taxon>
        <taxon>Bacillota</taxon>
        <taxon>Clostridia</taxon>
        <taxon>Eubacteriales</taxon>
        <taxon>Clostridiaceae</taxon>
        <taxon>Clostridium</taxon>
    </lineage>
</organism>
<name>HFQ_CLOBM</name>
<dbReference type="EMBL" id="CP000962">
    <property type="protein sequence ID" value="ACA55155.1"/>
    <property type="molecule type" value="Genomic_DNA"/>
</dbReference>
<dbReference type="RefSeq" id="WP_003358923.1">
    <property type="nucleotide sequence ID" value="NC_010520.1"/>
</dbReference>
<dbReference type="SMR" id="B1KSA0"/>
<dbReference type="GeneID" id="92938492"/>
<dbReference type="KEGG" id="cbl:CLK_1178"/>
<dbReference type="HOGENOM" id="CLU_113688_0_2_9"/>
<dbReference type="GO" id="GO:0005829">
    <property type="term" value="C:cytosol"/>
    <property type="evidence" value="ECO:0007669"/>
    <property type="project" value="TreeGrafter"/>
</dbReference>
<dbReference type="GO" id="GO:0003723">
    <property type="term" value="F:RNA binding"/>
    <property type="evidence" value="ECO:0007669"/>
    <property type="project" value="UniProtKB-UniRule"/>
</dbReference>
<dbReference type="GO" id="GO:0006355">
    <property type="term" value="P:regulation of DNA-templated transcription"/>
    <property type="evidence" value="ECO:0007669"/>
    <property type="project" value="InterPro"/>
</dbReference>
<dbReference type="GO" id="GO:0043487">
    <property type="term" value="P:regulation of RNA stability"/>
    <property type="evidence" value="ECO:0007669"/>
    <property type="project" value="TreeGrafter"/>
</dbReference>
<dbReference type="GO" id="GO:0045974">
    <property type="term" value="P:regulation of translation, ncRNA-mediated"/>
    <property type="evidence" value="ECO:0007669"/>
    <property type="project" value="TreeGrafter"/>
</dbReference>
<dbReference type="CDD" id="cd01716">
    <property type="entry name" value="Hfq"/>
    <property type="match status" value="1"/>
</dbReference>
<dbReference type="FunFam" id="2.30.30.100:FF:000012">
    <property type="entry name" value="RNA-binding protein Hfq"/>
    <property type="match status" value="1"/>
</dbReference>
<dbReference type="Gene3D" id="2.30.30.100">
    <property type="match status" value="1"/>
</dbReference>
<dbReference type="HAMAP" id="MF_00436">
    <property type="entry name" value="Hfq"/>
    <property type="match status" value="1"/>
</dbReference>
<dbReference type="InterPro" id="IPR005001">
    <property type="entry name" value="Hfq"/>
</dbReference>
<dbReference type="InterPro" id="IPR010920">
    <property type="entry name" value="LSM_dom_sf"/>
</dbReference>
<dbReference type="InterPro" id="IPR047575">
    <property type="entry name" value="Sm"/>
</dbReference>
<dbReference type="NCBIfam" id="TIGR02383">
    <property type="entry name" value="Hfq"/>
    <property type="match status" value="1"/>
</dbReference>
<dbReference type="NCBIfam" id="NF001602">
    <property type="entry name" value="PRK00395.1"/>
    <property type="match status" value="1"/>
</dbReference>
<dbReference type="PANTHER" id="PTHR34772">
    <property type="entry name" value="RNA-BINDING PROTEIN HFQ"/>
    <property type="match status" value="1"/>
</dbReference>
<dbReference type="PANTHER" id="PTHR34772:SF1">
    <property type="entry name" value="RNA-BINDING PROTEIN HFQ"/>
    <property type="match status" value="1"/>
</dbReference>
<dbReference type="Pfam" id="PF17209">
    <property type="entry name" value="Hfq"/>
    <property type="match status" value="1"/>
</dbReference>
<dbReference type="SUPFAM" id="SSF50182">
    <property type="entry name" value="Sm-like ribonucleoproteins"/>
    <property type="match status" value="1"/>
</dbReference>
<dbReference type="PROSITE" id="PS52002">
    <property type="entry name" value="SM"/>
    <property type="match status" value="1"/>
</dbReference>
<reference key="1">
    <citation type="journal article" date="2007" name="PLoS ONE">
        <title>Analysis of the neurotoxin complex genes in Clostridium botulinum A1-A4 and B1 strains: BoNT/A3, /Ba4 and /B1 clusters are located within plasmids.</title>
        <authorList>
            <person name="Smith T.J."/>
            <person name="Hill K.K."/>
            <person name="Foley B.T."/>
            <person name="Detter J.C."/>
            <person name="Munk A.C."/>
            <person name="Bruce D.C."/>
            <person name="Doggett N.A."/>
            <person name="Smith L.A."/>
            <person name="Marks J.D."/>
            <person name="Xie G."/>
            <person name="Brettin T.S."/>
        </authorList>
    </citation>
    <scope>NUCLEOTIDE SEQUENCE [LARGE SCALE GENOMIC DNA]</scope>
    <source>
        <strain>Loch Maree / Type A3</strain>
    </source>
</reference>
<keyword id="KW-0694">RNA-binding</keyword>
<keyword id="KW-0346">Stress response</keyword>
<evidence type="ECO:0000255" key="1">
    <source>
        <dbReference type="HAMAP-Rule" id="MF_00436"/>
    </source>
</evidence>
<evidence type="ECO:0000255" key="2">
    <source>
        <dbReference type="PROSITE-ProRule" id="PRU01346"/>
    </source>
</evidence>
<proteinExistence type="inferred from homology"/>
<protein>
    <recommendedName>
        <fullName evidence="1">RNA-binding protein Hfq</fullName>
    </recommendedName>
</protein>
<comment type="function">
    <text evidence="1">RNA chaperone that binds small regulatory RNA (sRNAs) and mRNAs to facilitate mRNA translational regulation in response to envelope stress, environmental stress and changes in metabolite concentrations. Also binds with high specificity to tRNAs.</text>
</comment>
<comment type="subunit">
    <text evidence="1">Homohexamer.</text>
</comment>
<comment type="similarity">
    <text evidence="1">Belongs to the Hfq family.</text>
</comment>
<gene>
    <name evidence="1" type="primary">hfq</name>
    <name type="ordered locus">CLK_1178</name>
</gene>
<sequence length="85" mass="9664">MTKVVNNLQDIFLNGARKNRIPVTIYLTNGFQLKGFVKGFDNFTVILDSDGKQMMIYKHAISTINPAKPLLFVQNPNGDDYKDKE</sequence>